<feature type="chain" id="PRO_0000383126" description="Large ribosomal subunit protein uL29A">
    <location>
        <begin position="1"/>
        <end position="122"/>
    </location>
</feature>
<feature type="coiled-coil region" evidence="2">
    <location>
        <begin position="10"/>
        <end position="69"/>
    </location>
</feature>
<accession>Q8ST62</accession>
<reference key="1">
    <citation type="journal article" date="2001" name="Nature">
        <title>Genome sequence and gene compaction of the eukaryote parasite Encephalitozoon cuniculi.</title>
        <authorList>
            <person name="Katinka M.D."/>
            <person name="Duprat S."/>
            <person name="Cornillot E."/>
            <person name="Metenier G."/>
            <person name="Thomarat F."/>
            <person name="Prensier G."/>
            <person name="Barbe V."/>
            <person name="Peyretaillade E."/>
            <person name="Brottier P."/>
            <person name="Wincker P."/>
            <person name="Delbac F."/>
            <person name="El Alaoui H."/>
            <person name="Peyret P."/>
            <person name="Saurin W."/>
            <person name="Gouy M."/>
            <person name="Weissenbach J."/>
            <person name="Vivares C.P."/>
        </authorList>
    </citation>
    <scope>NUCLEOTIDE SEQUENCE [LARGE SCALE GENOMIC DNA]</scope>
    <source>
        <strain>GB-M1</strain>
    </source>
</reference>
<reference key="2">
    <citation type="journal article" date="2006" name="Proteomics">
        <title>Proteomic analysis of the eukaryotic parasite Encephalitozoon cuniculi (microsporidia): a reference map for proteins expressed in late sporogonial stages.</title>
        <authorList>
            <person name="Brosson D."/>
            <person name="Kuhn L."/>
            <person name="Delbac F."/>
            <person name="Garin J."/>
            <person name="Vivares C.P."/>
            <person name="Texier C."/>
        </authorList>
    </citation>
    <scope>IDENTIFICATION BY MASS SPECTROMETRY [LARGE SCALE ANALYSIS]</scope>
    <scope>DEVELOPMENTAL STAGE</scope>
</reference>
<sequence>MKIEASALRQLGIKQIEERAAEIKADLAALRQKKNSGDVGANDIKTAKKNLARALTVRREKILEELVEAYRGTPVSKLPKELRPKLNRSKRRALTKTQLRRKTRRQRARMSKFPRVIFAYNE</sequence>
<gene>
    <name type="primary">RPL35A</name>
    <name type="ordered locus">ECU07_1820</name>
</gene>
<gene>
    <name type="primary">RPL35B</name>
    <name type="ordered locus">ECU10_0070</name>
</gene>
<organism>
    <name type="scientific">Encephalitozoon cuniculi (strain GB-M1)</name>
    <name type="common">Microsporidian parasite</name>
    <dbReference type="NCBI Taxonomy" id="284813"/>
    <lineage>
        <taxon>Eukaryota</taxon>
        <taxon>Fungi</taxon>
        <taxon>Fungi incertae sedis</taxon>
        <taxon>Microsporidia</taxon>
        <taxon>Unikaryonidae</taxon>
        <taxon>Encephalitozoon</taxon>
    </lineage>
</organism>
<name>RL351_ENCCU</name>
<protein>
    <recommendedName>
        <fullName evidence="4">Large ribosomal subunit protein uL29A</fullName>
    </recommendedName>
    <alternativeName>
        <fullName>60S ribosomal protein L35-1</fullName>
    </alternativeName>
</protein>
<comment type="subunit">
    <text evidence="1">Component of the large ribosomal subunit.</text>
</comment>
<comment type="subcellular location">
    <subcellularLocation>
        <location evidence="1">Cytoplasm</location>
    </subcellularLocation>
</comment>
<comment type="developmental stage">
    <text evidence="3">Expressed in late sporogonial stages.</text>
</comment>
<comment type="similarity">
    <text evidence="4">Belongs to the universal ribosomal protein uL29 family.</text>
</comment>
<proteinExistence type="evidence at protein level"/>
<keyword id="KW-0002">3D-structure</keyword>
<keyword id="KW-0175">Coiled coil</keyword>
<keyword id="KW-0963">Cytoplasm</keyword>
<keyword id="KW-1185">Reference proteome</keyword>
<keyword id="KW-0687">Ribonucleoprotein</keyword>
<keyword id="KW-0689">Ribosomal protein</keyword>
<evidence type="ECO:0000250" key="1"/>
<evidence type="ECO:0000255" key="2"/>
<evidence type="ECO:0000269" key="3">
    <source>
    </source>
</evidence>
<evidence type="ECO:0000305" key="4"/>
<dbReference type="EMBL" id="AL590447">
    <property type="protein sequence ID" value="CAD25713.1"/>
    <property type="molecule type" value="Genomic_DNA"/>
</dbReference>
<dbReference type="EMBL" id="AL590449">
    <property type="protein sequence ID" value="CAD25727.1"/>
    <property type="molecule type" value="Genomic_DNA"/>
</dbReference>
<dbReference type="RefSeq" id="NP_586109.1">
    <property type="nucleotide sequence ID" value="NM_001041731.1"/>
</dbReference>
<dbReference type="RefSeq" id="NP_586123.1">
    <property type="nucleotide sequence ID" value="NM_001041956.1"/>
</dbReference>
<dbReference type="PDB" id="7QEP">
    <property type="method" value="EM"/>
    <property type="resolution" value="2.70 A"/>
    <property type="chains" value="O5=1-122"/>
</dbReference>
<dbReference type="PDBsum" id="7QEP"/>
<dbReference type="EMDB" id="EMD-13936"/>
<dbReference type="SMR" id="Q8ST62"/>
<dbReference type="FunCoup" id="Q8ST62">
    <property type="interactions" value="163"/>
</dbReference>
<dbReference type="STRING" id="284813.Q8ST62"/>
<dbReference type="GeneID" id="859543"/>
<dbReference type="GeneID" id="859769"/>
<dbReference type="KEGG" id="ecu:ECU07_1820"/>
<dbReference type="KEGG" id="ecu:ECU10_0070"/>
<dbReference type="VEuPathDB" id="MicrosporidiaDB:ECU07_1820"/>
<dbReference type="VEuPathDB" id="MicrosporidiaDB:ECU10_0070"/>
<dbReference type="HOGENOM" id="CLU_110381_3_0_1"/>
<dbReference type="InParanoid" id="Q8ST62"/>
<dbReference type="OMA" id="VMNQKAR"/>
<dbReference type="OrthoDB" id="528635at2759"/>
<dbReference type="Proteomes" id="UP000000819">
    <property type="component" value="Chromosome VII"/>
</dbReference>
<dbReference type="Proteomes" id="UP000000819">
    <property type="component" value="Chromosome X"/>
</dbReference>
<dbReference type="GO" id="GO:0022625">
    <property type="term" value="C:cytosolic large ribosomal subunit"/>
    <property type="evidence" value="ECO:0007669"/>
    <property type="project" value="InterPro"/>
</dbReference>
<dbReference type="GO" id="GO:0003729">
    <property type="term" value="F:mRNA binding"/>
    <property type="evidence" value="ECO:0007669"/>
    <property type="project" value="TreeGrafter"/>
</dbReference>
<dbReference type="GO" id="GO:0003735">
    <property type="term" value="F:structural constituent of ribosome"/>
    <property type="evidence" value="ECO:0007669"/>
    <property type="project" value="InterPro"/>
</dbReference>
<dbReference type="GO" id="GO:0000463">
    <property type="term" value="P:maturation of LSU-rRNA from tricistronic rRNA transcript (SSU-rRNA, 5.8S rRNA, LSU-rRNA)"/>
    <property type="evidence" value="ECO:0007669"/>
    <property type="project" value="InterPro"/>
</dbReference>
<dbReference type="GO" id="GO:0006412">
    <property type="term" value="P:translation"/>
    <property type="evidence" value="ECO:0007669"/>
    <property type="project" value="InterPro"/>
</dbReference>
<dbReference type="Gene3D" id="1.10.287.310">
    <property type="match status" value="1"/>
</dbReference>
<dbReference type="Gene3D" id="6.10.250.3450">
    <property type="match status" value="1"/>
</dbReference>
<dbReference type="HAMAP" id="MF_00374">
    <property type="entry name" value="Ribosomal_uL29"/>
    <property type="match status" value="1"/>
</dbReference>
<dbReference type="InterPro" id="IPR001854">
    <property type="entry name" value="Ribosomal_uL29"/>
</dbReference>
<dbReference type="InterPro" id="IPR045059">
    <property type="entry name" value="Ribosomal_uL29_euk"/>
</dbReference>
<dbReference type="InterPro" id="IPR036049">
    <property type="entry name" value="Ribosomal_uL29_sf"/>
</dbReference>
<dbReference type="PANTHER" id="PTHR45722">
    <property type="entry name" value="60S RIBOSOMAL PROTEIN L35"/>
    <property type="match status" value="1"/>
</dbReference>
<dbReference type="PANTHER" id="PTHR45722:SF2">
    <property type="entry name" value="LARGE RIBOSOMAL SUBUNIT PROTEIN UL29-RELATED"/>
    <property type="match status" value="1"/>
</dbReference>
<dbReference type="Pfam" id="PF00831">
    <property type="entry name" value="Ribosomal_L29"/>
    <property type="match status" value="1"/>
</dbReference>
<dbReference type="SUPFAM" id="SSF46561">
    <property type="entry name" value="Ribosomal protein L29 (L29p)"/>
    <property type="match status" value="1"/>
</dbReference>